<sequence length="83" mass="9413">MSGNTGERSFADIITSIRYWVIHSITIPSLFIAGWLFVSTGLAYDVFGSPRPNEYFTESRQGIPLITGRFDSLEQLNEFSRSF</sequence>
<proteinExistence type="evidence at transcript level"/>
<name>PSBE_CUSRE</name>
<accession>A7M969</accession>
<gene>
    <name evidence="1" type="primary">psbE</name>
</gene>
<geneLocation type="plastid"/>
<evidence type="ECO:0000255" key="1">
    <source>
        <dbReference type="HAMAP-Rule" id="MF_00642"/>
    </source>
</evidence>
<evidence type="ECO:0000269" key="2">
    <source>
    </source>
</evidence>
<evidence type="ECO:0000305" key="3"/>
<protein>
    <recommendedName>
        <fullName evidence="1">Cytochrome b559 subunit alpha</fullName>
    </recommendedName>
    <alternativeName>
        <fullName evidence="1">PSII reaction center subunit V</fullName>
    </alternativeName>
</protein>
<keyword id="KW-0249">Electron transport</keyword>
<keyword id="KW-0349">Heme</keyword>
<keyword id="KW-0408">Iron</keyword>
<keyword id="KW-0472">Membrane</keyword>
<keyword id="KW-0479">Metal-binding</keyword>
<keyword id="KW-0602">Photosynthesis</keyword>
<keyword id="KW-0604">Photosystem II</keyword>
<keyword id="KW-0934">Plastid</keyword>
<keyword id="KW-0691">RNA editing</keyword>
<keyword id="KW-0812">Transmembrane</keyword>
<keyword id="KW-1133">Transmembrane helix</keyword>
<keyword id="KW-0813">Transport</keyword>
<comment type="function">
    <text evidence="1">This b-type cytochrome is tightly associated with the reaction center of photosystem II (PSII). PSII is a light-driven water:plastoquinone oxidoreductase that uses light energy to abstract electrons from H(2)O, generating O(2) and a proton gradient subsequently used for ATP formation. It consists of a core antenna complex that captures photons, and an electron transfer chain that converts photonic excitation into a charge separation.</text>
</comment>
<comment type="cofactor">
    <cofactor evidence="1">
        <name>heme b</name>
        <dbReference type="ChEBI" id="CHEBI:60344"/>
    </cofactor>
    <text evidence="1">With its partner (PsbF) binds heme. PSII binds additional chlorophylls, carotenoids and specific lipids.</text>
</comment>
<comment type="subunit">
    <text evidence="1">Heterodimer of an alpha subunit and a beta subunit. PSII is composed of 1 copy each of membrane proteins PsbA, PsbB, PsbC, PsbD, PsbE, PsbF, PsbH, PsbI, PsbJ, PsbK, PsbL, PsbM, PsbT, PsbX, PsbY, PsbZ, Psb30/Ycf12, at least 3 peripheral proteins of the oxygen-evolving complex and a large number of cofactors. It forms dimeric complexes.</text>
</comment>
<comment type="subcellular location">
    <subcellularLocation>
        <location evidence="1">Plastid membrane</location>
        <topology evidence="1">Single-pass membrane protein</topology>
    </subcellularLocation>
</comment>
<comment type="RNA editing">
    <location>
        <position position="72" evidence="2"/>
    </location>
</comment>
<comment type="similarity">
    <text evidence="1">Belongs to the PsbE/PsbF family.</text>
</comment>
<comment type="caution">
    <text evidence="3">Young tissue from this organism is photosynthetic and contains some thylakoids, although the photosynthetic activity does not exceed the light compensation point.</text>
</comment>
<feature type="chain" id="PRO_0000308471" description="Cytochrome b559 subunit alpha">
    <location>
        <begin position="1"/>
        <end position="83"/>
    </location>
</feature>
<feature type="transmembrane region" description="Helical" evidence="1">
    <location>
        <begin position="21"/>
        <end position="35"/>
    </location>
</feature>
<feature type="binding site" description="axial binding residue" evidence="1">
    <location>
        <position position="23"/>
    </location>
    <ligand>
        <name>heme</name>
        <dbReference type="ChEBI" id="CHEBI:30413"/>
        <note>ligand shared with beta subunit</note>
    </ligand>
    <ligandPart>
        <name>Fe</name>
        <dbReference type="ChEBI" id="CHEBI:18248"/>
    </ligandPart>
</feature>
<organism>
    <name type="scientific">Cuscuta reflexa</name>
    <name type="common">Southern Asian dodder</name>
    <dbReference type="NCBI Taxonomy" id="4129"/>
    <lineage>
        <taxon>Eukaryota</taxon>
        <taxon>Viridiplantae</taxon>
        <taxon>Streptophyta</taxon>
        <taxon>Embryophyta</taxon>
        <taxon>Tracheophyta</taxon>
        <taxon>Spermatophyta</taxon>
        <taxon>Magnoliopsida</taxon>
        <taxon>eudicotyledons</taxon>
        <taxon>Gunneridae</taxon>
        <taxon>Pentapetalae</taxon>
        <taxon>asterids</taxon>
        <taxon>lamiids</taxon>
        <taxon>Solanales</taxon>
        <taxon>Convolvulaceae</taxon>
        <taxon>Cuscuteae</taxon>
        <taxon>Cuscuta</taxon>
        <taxon>Cuscuta subgen. Monogynella</taxon>
    </lineage>
</organism>
<dbReference type="EMBL" id="AM711640">
    <property type="protein sequence ID" value="CAM98397.1"/>
    <property type="status" value="ALT_SEQ"/>
    <property type="molecule type" value="Genomic_DNA"/>
</dbReference>
<dbReference type="RefSeq" id="YP_001430111.1">
    <property type="nucleotide sequence ID" value="NC_009766.1"/>
</dbReference>
<dbReference type="SMR" id="A7M969"/>
<dbReference type="GeneID" id="5536676"/>
<dbReference type="GO" id="GO:0009539">
    <property type="term" value="C:photosystem II reaction center"/>
    <property type="evidence" value="ECO:0007669"/>
    <property type="project" value="InterPro"/>
</dbReference>
<dbReference type="GO" id="GO:0042170">
    <property type="term" value="C:plastid membrane"/>
    <property type="evidence" value="ECO:0007669"/>
    <property type="project" value="UniProtKB-SubCell"/>
</dbReference>
<dbReference type="GO" id="GO:0042651">
    <property type="term" value="C:thylakoid membrane"/>
    <property type="evidence" value="ECO:0007669"/>
    <property type="project" value="UniProtKB-UniRule"/>
</dbReference>
<dbReference type="GO" id="GO:0009055">
    <property type="term" value="F:electron transfer activity"/>
    <property type="evidence" value="ECO:0007669"/>
    <property type="project" value="UniProtKB-UniRule"/>
</dbReference>
<dbReference type="GO" id="GO:0020037">
    <property type="term" value="F:heme binding"/>
    <property type="evidence" value="ECO:0007669"/>
    <property type="project" value="InterPro"/>
</dbReference>
<dbReference type="GO" id="GO:0005506">
    <property type="term" value="F:iron ion binding"/>
    <property type="evidence" value="ECO:0007669"/>
    <property type="project" value="UniProtKB-UniRule"/>
</dbReference>
<dbReference type="GO" id="GO:0009767">
    <property type="term" value="P:photosynthetic electron transport chain"/>
    <property type="evidence" value="ECO:0007669"/>
    <property type="project" value="InterPro"/>
</dbReference>
<dbReference type="Gene3D" id="1.20.5.860">
    <property type="entry name" value="Photosystem II cytochrome b559, alpha subunit"/>
    <property type="match status" value="1"/>
</dbReference>
<dbReference type="HAMAP" id="MF_00642">
    <property type="entry name" value="PSII_PsbE"/>
    <property type="match status" value="1"/>
</dbReference>
<dbReference type="InterPro" id="IPR006217">
    <property type="entry name" value="PSII_cyt_b559_asu"/>
</dbReference>
<dbReference type="InterPro" id="IPR037025">
    <property type="entry name" value="PSII_cyt_b559_asu_sf"/>
</dbReference>
<dbReference type="InterPro" id="IPR006216">
    <property type="entry name" value="PSII_cyt_b559_CS"/>
</dbReference>
<dbReference type="InterPro" id="IPR013081">
    <property type="entry name" value="PSII_cyt_b559_N"/>
</dbReference>
<dbReference type="InterPro" id="IPR013082">
    <property type="entry name" value="PSII_cytb559_asu_lum"/>
</dbReference>
<dbReference type="NCBIfam" id="TIGR01332">
    <property type="entry name" value="cyt_b559_alpha"/>
    <property type="match status" value="1"/>
</dbReference>
<dbReference type="PANTHER" id="PTHR33391">
    <property type="entry name" value="CYTOCHROME B559 SUBUNIT BETA-RELATED"/>
    <property type="match status" value="1"/>
</dbReference>
<dbReference type="PANTHER" id="PTHR33391:SF9">
    <property type="entry name" value="CYTOCHROME B559 SUBUNIT BETA-RELATED"/>
    <property type="match status" value="1"/>
</dbReference>
<dbReference type="Pfam" id="PF00283">
    <property type="entry name" value="Cytochrom_B559"/>
    <property type="match status" value="1"/>
</dbReference>
<dbReference type="Pfam" id="PF00284">
    <property type="entry name" value="Cytochrom_B559a"/>
    <property type="match status" value="1"/>
</dbReference>
<dbReference type="PIRSF" id="PIRSF000036">
    <property type="entry name" value="PsbE"/>
    <property type="match status" value="1"/>
</dbReference>
<dbReference type="SUPFAM" id="SSF161045">
    <property type="entry name" value="Cytochrome b559 subunits"/>
    <property type="match status" value="1"/>
</dbReference>
<dbReference type="PROSITE" id="PS00537">
    <property type="entry name" value="CYTOCHROME_B559"/>
    <property type="match status" value="1"/>
</dbReference>
<reference key="1">
    <citation type="journal article" date="2007" name="BMC Plant Biol.">
        <title>Complete DNA sequences of the plastid genomes of two parasitic flowering plant species, Cuscuta reflexa and Cuscuta gronovii.</title>
        <authorList>
            <person name="Funk H.T."/>
            <person name="Berg S."/>
            <person name="Krupinska K."/>
            <person name="Maier U.-G."/>
            <person name="Krause K."/>
        </authorList>
    </citation>
    <scope>NUCLEOTIDE SEQUENCE [LARGE SCALE GENOMIC DNA]</scope>
    <scope>RNA EDITING</scope>
</reference>